<organism>
    <name type="scientific">Enterococcus faecalis (strain TX4000 / JH2-2)</name>
    <dbReference type="NCBI Taxonomy" id="749493"/>
    <lineage>
        <taxon>Bacteria</taxon>
        <taxon>Bacillati</taxon>
        <taxon>Bacillota</taxon>
        <taxon>Bacilli</taxon>
        <taxon>Lactobacillales</taxon>
        <taxon>Enterococcaceae</taxon>
        <taxon>Enterococcus</taxon>
    </lineage>
</organism>
<proteinExistence type="evidence at protein level"/>
<evidence type="ECO:0000255" key="1">
    <source>
        <dbReference type="HAMAP-Rule" id="MF_01400"/>
    </source>
</evidence>
<evidence type="ECO:0000255" key="2">
    <source>
        <dbReference type="PROSITE-ProRule" id="PRU01126"/>
    </source>
</evidence>
<evidence type="ECO:0000269" key="3">
    <source>
    </source>
</evidence>
<evidence type="ECO:0000305" key="4"/>
<reference key="1">
    <citation type="journal article" date="2000" name="Appl. Microbiol. Biotechnol.">
        <title>Cloning, characterization and expression of an Enterococcus faecalis gene responsive to heavy metals.</title>
        <authorList>
            <person name="Laplace J.M."/>
            <person name="Hartke A."/>
            <person name="Giard J.-C."/>
            <person name="Auffray Y."/>
        </authorList>
    </citation>
    <scope>NUCLEOTIDE SEQUENCE [GENOMIC DNA]</scope>
    <scope>INDUCTION</scope>
    <scope>PROTEIN SEQUENCE OF 1-25</scope>
    <source>
        <strain>TX4000 / JH2-2</strain>
    </source>
</reference>
<reference key="2">
    <citation type="submission" date="2010-09" db="EMBL/GenBank/DDBJ databases">
        <authorList>
            <person name="Weinstock G."/>
            <person name="Sodergren E."/>
            <person name="Clifton S."/>
            <person name="Fulton L."/>
            <person name="Fulton B."/>
            <person name="Courtney L."/>
            <person name="Fronick C."/>
            <person name="Harrison M."/>
            <person name="Strong C."/>
            <person name="Farmer C."/>
            <person name="Delahaunty K."/>
            <person name="Markovic C."/>
            <person name="Hall O."/>
            <person name="Minx P."/>
            <person name="Tomlinson C."/>
            <person name="Mitreva M."/>
            <person name="Hou S."/>
            <person name="Chen J."/>
            <person name="Wollam A."/>
            <person name="Pepin K.H."/>
            <person name="Johnson M."/>
            <person name="Bhonagiri V."/>
            <person name="Zhang X."/>
            <person name="Suruliraj S."/>
            <person name="Warren W."/>
            <person name="Chinwalla A."/>
            <person name="Mardis E.R."/>
            <person name="Wilson R.K."/>
        </authorList>
    </citation>
    <scope>NUCLEOTIDE SEQUENCE [LARGE SCALE GENOMIC DNA]</scope>
    <source>
        <strain>TX4000 / JH2-2</strain>
    </source>
</reference>
<sequence length="145" mass="16351">MTKPTEEELKQTLTDLQYAVTQENATERPFSGEYDDFYQDGIYVDIVSGEPLFSSLDKYDAGCGWPSFTKPIEKRGVKEKADFSHGMHRVEVRSQEADSHLGHVFTDGPLQEGGLRYCINAAALRFVPVADLEKEGYGEYLSLFK</sequence>
<dbReference type="EC" id="1.8.4.12" evidence="1"/>
<dbReference type="EMBL" id="AJ243482">
    <property type="protein sequence ID" value="CAB46979.1"/>
    <property type="molecule type" value="Genomic_DNA"/>
</dbReference>
<dbReference type="EMBL" id="AEBB01000072">
    <property type="protein sequence ID" value="EFT40245.1"/>
    <property type="status" value="ALT_INIT"/>
    <property type="molecule type" value="Genomic_DNA"/>
</dbReference>
<dbReference type="RefSeq" id="WP_002354871.1">
    <property type="nucleotide sequence ID" value="NZ_GL476298.1"/>
</dbReference>
<dbReference type="SMR" id="E6ESW1"/>
<dbReference type="GeneID" id="60892404"/>
<dbReference type="PATRIC" id="fig|749493.3.peg.2585"/>
<dbReference type="HOGENOM" id="CLU_031040_8_5_9"/>
<dbReference type="GO" id="GO:0005737">
    <property type="term" value="C:cytoplasm"/>
    <property type="evidence" value="ECO:0007669"/>
    <property type="project" value="TreeGrafter"/>
</dbReference>
<dbReference type="GO" id="GO:0033743">
    <property type="term" value="F:peptide-methionine (R)-S-oxide reductase activity"/>
    <property type="evidence" value="ECO:0007669"/>
    <property type="project" value="UniProtKB-UniRule"/>
</dbReference>
<dbReference type="GO" id="GO:0030091">
    <property type="term" value="P:protein repair"/>
    <property type="evidence" value="ECO:0007669"/>
    <property type="project" value="InterPro"/>
</dbReference>
<dbReference type="GO" id="GO:0006979">
    <property type="term" value="P:response to oxidative stress"/>
    <property type="evidence" value="ECO:0007669"/>
    <property type="project" value="InterPro"/>
</dbReference>
<dbReference type="FunFam" id="2.170.150.20:FF:000003">
    <property type="entry name" value="Peptide methionine sulfoxide reductase MsrB"/>
    <property type="match status" value="1"/>
</dbReference>
<dbReference type="Gene3D" id="2.170.150.20">
    <property type="entry name" value="Peptide methionine sulfoxide reductase"/>
    <property type="match status" value="1"/>
</dbReference>
<dbReference type="HAMAP" id="MF_01400">
    <property type="entry name" value="MsrB"/>
    <property type="match status" value="1"/>
</dbReference>
<dbReference type="InterPro" id="IPR028427">
    <property type="entry name" value="Met_Sox_Rdtase_MsrB"/>
</dbReference>
<dbReference type="InterPro" id="IPR002579">
    <property type="entry name" value="Met_Sox_Rdtase_MsrB_dom"/>
</dbReference>
<dbReference type="InterPro" id="IPR011057">
    <property type="entry name" value="Mss4-like_sf"/>
</dbReference>
<dbReference type="NCBIfam" id="TIGR00357">
    <property type="entry name" value="peptide-methionine (R)-S-oxide reductase MsrB"/>
    <property type="match status" value="1"/>
</dbReference>
<dbReference type="PANTHER" id="PTHR10173">
    <property type="entry name" value="METHIONINE SULFOXIDE REDUCTASE"/>
    <property type="match status" value="1"/>
</dbReference>
<dbReference type="PANTHER" id="PTHR10173:SF59">
    <property type="entry name" value="PEPTIDE METHIONINE SULFOXIDE REDUCTASE MSRA_MSRB"/>
    <property type="match status" value="1"/>
</dbReference>
<dbReference type="Pfam" id="PF01641">
    <property type="entry name" value="SelR"/>
    <property type="match status" value="1"/>
</dbReference>
<dbReference type="SUPFAM" id="SSF51316">
    <property type="entry name" value="Mss4-like"/>
    <property type="match status" value="1"/>
</dbReference>
<dbReference type="PROSITE" id="PS51790">
    <property type="entry name" value="MSRB"/>
    <property type="match status" value="1"/>
</dbReference>
<accession>E6ESW1</accession>
<accession>Q9XB39</accession>
<keyword id="KW-0903">Direct protein sequencing</keyword>
<keyword id="KW-0560">Oxidoreductase</keyword>
<keyword id="KW-0346">Stress response</keyword>
<feature type="chain" id="PRO_0000422421" description="Peptide methionine sulfoxide reductase MsrB">
    <location>
        <begin position="1"/>
        <end position="145"/>
    </location>
</feature>
<feature type="domain" description="MsrB" evidence="2">
    <location>
        <begin position="6"/>
        <end position="129"/>
    </location>
</feature>
<feature type="active site" description="Nucleophile" evidence="2">
    <location>
        <position position="118"/>
    </location>
</feature>
<feature type="sequence conflict" description="In Ref. 1; CAB46979." evidence="4" ref="1">
    <original>GYGEYLSLFK</original>
    <variation>AMANTFLYSNNPHFLDKYDKIVRKKATFDEYLV</variation>
    <location>
        <begin position="136"/>
        <end position="145"/>
    </location>
</feature>
<name>MSRB_ENTFT</name>
<gene>
    <name evidence="1" type="primary">msrB</name>
    <name type="synonym">csrA</name>
    <name type="ORF">HMPREF9496_02734</name>
</gene>
<comment type="catalytic activity">
    <reaction evidence="1">
        <text>L-methionyl-[protein] + [thioredoxin]-disulfide + H2O = L-methionyl-(R)-S-oxide-[protein] + [thioredoxin]-dithiol</text>
        <dbReference type="Rhea" id="RHEA:24164"/>
        <dbReference type="Rhea" id="RHEA-COMP:10698"/>
        <dbReference type="Rhea" id="RHEA-COMP:10700"/>
        <dbReference type="Rhea" id="RHEA-COMP:12313"/>
        <dbReference type="Rhea" id="RHEA-COMP:12314"/>
        <dbReference type="ChEBI" id="CHEBI:15377"/>
        <dbReference type="ChEBI" id="CHEBI:16044"/>
        <dbReference type="ChEBI" id="CHEBI:29950"/>
        <dbReference type="ChEBI" id="CHEBI:45764"/>
        <dbReference type="ChEBI" id="CHEBI:50058"/>
        <dbReference type="EC" id="1.8.4.12"/>
    </reaction>
</comment>
<comment type="induction">
    <text evidence="3">By cadmium, lead, mercury, copper and manganese.</text>
</comment>
<comment type="similarity">
    <text evidence="1">Belongs to the MsrB Met sulfoxide reductase family.</text>
</comment>
<comment type="sequence caution" evidence="4">
    <conflict type="erroneous initiation">
        <sequence resource="EMBL-CDS" id="EFT40245"/>
    </conflict>
    <text>Extended N-terminus.</text>
</comment>
<protein>
    <recommendedName>
        <fullName evidence="1">Peptide methionine sulfoxide reductase MsrB</fullName>
        <ecNumber evidence="1">1.8.4.12</ecNumber>
    </recommendedName>
    <alternativeName>
        <fullName evidence="1">Peptide-methionine (R)-S-oxide reductase</fullName>
    </alternativeName>
</protein>